<name>LEUD_BRUC2</name>
<accession>A9MCG4</accession>
<dbReference type="EC" id="4.2.1.33" evidence="1"/>
<dbReference type="EMBL" id="CP000873">
    <property type="protein sequence ID" value="ABX64051.1"/>
    <property type="molecule type" value="Genomic_DNA"/>
</dbReference>
<dbReference type="RefSeq" id="WP_002965763.1">
    <property type="nucleotide sequence ID" value="NC_010104.1"/>
</dbReference>
<dbReference type="SMR" id="A9MCG4"/>
<dbReference type="GeneID" id="97535045"/>
<dbReference type="KEGG" id="bcs:BCAN_B0901"/>
<dbReference type="HOGENOM" id="CLU_081378_0_3_5"/>
<dbReference type="PhylomeDB" id="A9MCG4"/>
<dbReference type="UniPathway" id="UPA00048">
    <property type="reaction ID" value="UER00071"/>
</dbReference>
<dbReference type="Proteomes" id="UP000001385">
    <property type="component" value="Chromosome II"/>
</dbReference>
<dbReference type="GO" id="GO:0009316">
    <property type="term" value="C:3-isopropylmalate dehydratase complex"/>
    <property type="evidence" value="ECO:0007669"/>
    <property type="project" value="InterPro"/>
</dbReference>
<dbReference type="GO" id="GO:0003861">
    <property type="term" value="F:3-isopropylmalate dehydratase activity"/>
    <property type="evidence" value="ECO:0007669"/>
    <property type="project" value="UniProtKB-UniRule"/>
</dbReference>
<dbReference type="GO" id="GO:0009098">
    <property type="term" value="P:L-leucine biosynthetic process"/>
    <property type="evidence" value="ECO:0007669"/>
    <property type="project" value="UniProtKB-UniRule"/>
</dbReference>
<dbReference type="CDD" id="cd01577">
    <property type="entry name" value="IPMI_Swivel"/>
    <property type="match status" value="1"/>
</dbReference>
<dbReference type="FunFam" id="3.20.19.10:FF:000003">
    <property type="entry name" value="3-isopropylmalate dehydratase small subunit"/>
    <property type="match status" value="1"/>
</dbReference>
<dbReference type="Gene3D" id="3.20.19.10">
    <property type="entry name" value="Aconitase, domain 4"/>
    <property type="match status" value="1"/>
</dbReference>
<dbReference type="HAMAP" id="MF_01031">
    <property type="entry name" value="LeuD_type1"/>
    <property type="match status" value="1"/>
</dbReference>
<dbReference type="InterPro" id="IPR004431">
    <property type="entry name" value="3-IsopropMal_deHydase_ssu"/>
</dbReference>
<dbReference type="InterPro" id="IPR015928">
    <property type="entry name" value="Aconitase/3IPM_dehydase_swvl"/>
</dbReference>
<dbReference type="InterPro" id="IPR000573">
    <property type="entry name" value="AconitaseA/IPMdHydase_ssu_swvl"/>
</dbReference>
<dbReference type="InterPro" id="IPR033940">
    <property type="entry name" value="IPMI_Swivel"/>
</dbReference>
<dbReference type="InterPro" id="IPR050075">
    <property type="entry name" value="LeuD"/>
</dbReference>
<dbReference type="NCBIfam" id="TIGR00171">
    <property type="entry name" value="leuD"/>
    <property type="match status" value="1"/>
</dbReference>
<dbReference type="NCBIfam" id="NF002458">
    <property type="entry name" value="PRK01641.1"/>
    <property type="match status" value="1"/>
</dbReference>
<dbReference type="PANTHER" id="PTHR43345:SF5">
    <property type="entry name" value="3-ISOPROPYLMALATE DEHYDRATASE SMALL SUBUNIT"/>
    <property type="match status" value="1"/>
</dbReference>
<dbReference type="PANTHER" id="PTHR43345">
    <property type="entry name" value="3-ISOPROPYLMALATE DEHYDRATASE SMALL SUBUNIT 2-RELATED-RELATED"/>
    <property type="match status" value="1"/>
</dbReference>
<dbReference type="Pfam" id="PF00694">
    <property type="entry name" value="Aconitase_C"/>
    <property type="match status" value="1"/>
</dbReference>
<dbReference type="SUPFAM" id="SSF52016">
    <property type="entry name" value="LeuD/IlvD-like"/>
    <property type="match status" value="1"/>
</dbReference>
<organism>
    <name type="scientific">Brucella canis (strain ATCC 23365 / NCTC 10854 / RM-666)</name>
    <dbReference type="NCBI Taxonomy" id="483179"/>
    <lineage>
        <taxon>Bacteria</taxon>
        <taxon>Pseudomonadati</taxon>
        <taxon>Pseudomonadota</taxon>
        <taxon>Alphaproteobacteria</taxon>
        <taxon>Hyphomicrobiales</taxon>
        <taxon>Brucellaceae</taxon>
        <taxon>Brucella/Ochrobactrum group</taxon>
        <taxon>Brucella</taxon>
    </lineage>
</organism>
<evidence type="ECO:0000255" key="1">
    <source>
        <dbReference type="HAMAP-Rule" id="MF_01031"/>
    </source>
</evidence>
<protein>
    <recommendedName>
        <fullName evidence="1">3-isopropylmalate dehydratase small subunit</fullName>
        <ecNumber evidence="1">4.2.1.33</ecNumber>
    </recommendedName>
    <alternativeName>
        <fullName evidence="1">Alpha-IPM isomerase</fullName>
        <shortName evidence="1">IPMI</shortName>
    </alternativeName>
    <alternativeName>
        <fullName evidence="1">Isopropylmalate isomerase</fullName>
    </alternativeName>
</protein>
<comment type="function">
    <text evidence="1">Catalyzes the isomerization between 2-isopropylmalate and 3-isopropylmalate, via the formation of 2-isopropylmaleate.</text>
</comment>
<comment type="catalytic activity">
    <reaction evidence="1">
        <text>(2R,3S)-3-isopropylmalate = (2S)-2-isopropylmalate</text>
        <dbReference type="Rhea" id="RHEA:32287"/>
        <dbReference type="ChEBI" id="CHEBI:1178"/>
        <dbReference type="ChEBI" id="CHEBI:35121"/>
        <dbReference type="EC" id="4.2.1.33"/>
    </reaction>
</comment>
<comment type="pathway">
    <text evidence="1">Amino-acid biosynthesis; L-leucine biosynthesis; L-leucine from 3-methyl-2-oxobutanoate: step 2/4.</text>
</comment>
<comment type="subunit">
    <text evidence="1">Heterodimer of LeuC and LeuD.</text>
</comment>
<comment type="similarity">
    <text evidence="1">Belongs to the LeuD family. LeuD type 1 subfamily.</text>
</comment>
<gene>
    <name evidence="1" type="primary">leuD</name>
    <name type="ordered locus">BCAN_B0901</name>
</gene>
<reference key="1">
    <citation type="submission" date="2007-10" db="EMBL/GenBank/DDBJ databases">
        <title>Brucella canis ATCC 23365 whole genome shotgun sequencing project.</title>
        <authorList>
            <person name="Setubal J.C."/>
            <person name="Bowns C."/>
            <person name="Boyle S."/>
            <person name="Crasta O.R."/>
            <person name="Czar M.J."/>
            <person name="Dharmanolla C."/>
            <person name="Gillespie J.J."/>
            <person name="Kenyon R.W."/>
            <person name="Lu J."/>
            <person name="Mane S."/>
            <person name="Mohapatra S."/>
            <person name="Nagrani S."/>
            <person name="Purkayastha A."/>
            <person name="Rajasimha H.K."/>
            <person name="Shallom J.M."/>
            <person name="Shallom S."/>
            <person name="Shukla M."/>
            <person name="Snyder E.E."/>
            <person name="Sobral B.W."/>
            <person name="Wattam A.R."/>
            <person name="Will R."/>
            <person name="Williams K."/>
            <person name="Yoo H."/>
            <person name="Bruce D."/>
            <person name="Detter C."/>
            <person name="Munk C."/>
            <person name="Brettin T.S."/>
        </authorList>
    </citation>
    <scope>NUCLEOTIDE SEQUENCE [LARGE SCALE GENOMIC DNA]</scope>
    <source>
        <strain>ATCC 23365 / NCTC 10854 / RM-666</strain>
    </source>
</reference>
<proteinExistence type="inferred from homology"/>
<keyword id="KW-0028">Amino-acid biosynthesis</keyword>
<keyword id="KW-0100">Branched-chain amino acid biosynthesis</keyword>
<keyword id="KW-0432">Leucine biosynthesis</keyword>
<keyword id="KW-0456">Lyase</keyword>
<keyword id="KW-1185">Reference proteome</keyword>
<feature type="chain" id="PRO_1000084245" description="3-isopropylmalate dehydratase small subunit">
    <location>
        <begin position="1"/>
        <end position="201"/>
    </location>
</feature>
<sequence length="201" mass="22236">MDKFTKLTGVAAPLPIVNIDTDMIIPKDYLKTIKRTGLGKGLFAEMRFNEDGSENPDFVLNKPGYRKAQILVAGDNFGCGSSREHAPWALLDYGIRCVISTSFADIFYNNCFKNGILPIKVAQEDLDKLMDDASRGANATLTIDLETKQIHGPDGGTISFDLDDFKRHCLLNGLDDIGLTMEKAKSIDTFEAKNAEERPWA</sequence>